<proteinExistence type="inferred from homology"/>
<dbReference type="EC" id="2.4.2.18" evidence="1"/>
<dbReference type="EMBL" id="CT978603">
    <property type="protein sequence ID" value="CAK28235.1"/>
    <property type="molecule type" value="Genomic_DNA"/>
</dbReference>
<dbReference type="SMR" id="A5GTM6"/>
<dbReference type="STRING" id="316278.SynRCC307_1332"/>
<dbReference type="KEGG" id="syr:SynRCC307_1332"/>
<dbReference type="eggNOG" id="COG0547">
    <property type="taxonomic scope" value="Bacteria"/>
</dbReference>
<dbReference type="HOGENOM" id="CLU_034315_2_1_3"/>
<dbReference type="OrthoDB" id="9806430at2"/>
<dbReference type="UniPathway" id="UPA00035">
    <property type="reaction ID" value="UER00041"/>
</dbReference>
<dbReference type="Proteomes" id="UP000001115">
    <property type="component" value="Chromosome"/>
</dbReference>
<dbReference type="GO" id="GO:0005829">
    <property type="term" value="C:cytosol"/>
    <property type="evidence" value="ECO:0007669"/>
    <property type="project" value="TreeGrafter"/>
</dbReference>
<dbReference type="GO" id="GO:0004048">
    <property type="term" value="F:anthranilate phosphoribosyltransferase activity"/>
    <property type="evidence" value="ECO:0007669"/>
    <property type="project" value="UniProtKB-UniRule"/>
</dbReference>
<dbReference type="GO" id="GO:0000287">
    <property type="term" value="F:magnesium ion binding"/>
    <property type="evidence" value="ECO:0007669"/>
    <property type="project" value="UniProtKB-UniRule"/>
</dbReference>
<dbReference type="GO" id="GO:0000162">
    <property type="term" value="P:L-tryptophan biosynthetic process"/>
    <property type="evidence" value="ECO:0007669"/>
    <property type="project" value="UniProtKB-UniRule"/>
</dbReference>
<dbReference type="FunFam" id="3.40.1030.10:FF:000002">
    <property type="entry name" value="Anthranilate phosphoribosyltransferase"/>
    <property type="match status" value="1"/>
</dbReference>
<dbReference type="Gene3D" id="3.40.1030.10">
    <property type="entry name" value="Nucleoside phosphorylase/phosphoribosyltransferase catalytic domain"/>
    <property type="match status" value="1"/>
</dbReference>
<dbReference type="Gene3D" id="1.20.970.10">
    <property type="entry name" value="Transferase, Pyrimidine Nucleoside Phosphorylase, Chain C"/>
    <property type="match status" value="1"/>
</dbReference>
<dbReference type="HAMAP" id="MF_00211">
    <property type="entry name" value="TrpD"/>
    <property type="match status" value="1"/>
</dbReference>
<dbReference type="InterPro" id="IPR005940">
    <property type="entry name" value="Anthranilate_Pribosyl_Tfrase"/>
</dbReference>
<dbReference type="InterPro" id="IPR000312">
    <property type="entry name" value="Glycosyl_Trfase_fam3"/>
</dbReference>
<dbReference type="InterPro" id="IPR017459">
    <property type="entry name" value="Glycosyl_Trfase_fam3_N_dom"/>
</dbReference>
<dbReference type="InterPro" id="IPR036320">
    <property type="entry name" value="Glycosyl_Trfase_fam3_N_dom_sf"/>
</dbReference>
<dbReference type="InterPro" id="IPR035902">
    <property type="entry name" value="Nuc_phospho_transferase"/>
</dbReference>
<dbReference type="NCBIfam" id="TIGR01245">
    <property type="entry name" value="trpD"/>
    <property type="match status" value="1"/>
</dbReference>
<dbReference type="PANTHER" id="PTHR43285">
    <property type="entry name" value="ANTHRANILATE PHOSPHORIBOSYLTRANSFERASE"/>
    <property type="match status" value="1"/>
</dbReference>
<dbReference type="PANTHER" id="PTHR43285:SF2">
    <property type="entry name" value="ANTHRANILATE PHOSPHORIBOSYLTRANSFERASE"/>
    <property type="match status" value="1"/>
</dbReference>
<dbReference type="Pfam" id="PF02885">
    <property type="entry name" value="Glycos_trans_3N"/>
    <property type="match status" value="1"/>
</dbReference>
<dbReference type="Pfam" id="PF00591">
    <property type="entry name" value="Glycos_transf_3"/>
    <property type="match status" value="1"/>
</dbReference>
<dbReference type="SUPFAM" id="SSF52418">
    <property type="entry name" value="Nucleoside phosphorylase/phosphoribosyltransferase catalytic domain"/>
    <property type="match status" value="1"/>
</dbReference>
<dbReference type="SUPFAM" id="SSF47648">
    <property type="entry name" value="Nucleoside phosphorylase/phosphoribosyltransferase N-terminal domain"/>
    <property type="match status" value="1"/>
</dbReference>
<gene>
    <name evidence="1" type="primary">trpD</name>
    <name type="ordered locus">SynRCC307_1332</name>
</gene>
<keyword id="KW-0028">Amino-acid biosynthesis</keyword>
<keyword id="KW-0057">Aromatic amino acid biosynthesis</keyword>
<keyword id="KW-0328">Glycosyltransferase</keyword>
<keyword id="KW-0460">Magnesium</keyword>
<keyword id="KW-0479">Metal-binding</keyword>
<keyword id="KW-1185">Reference proteome</keyword>
<keyword id="KW-0808">Transferase</keyword>
<keyword id="KW-0822">Tryptophan biosynthesis</keyword>
<feature type="chain" id="PRO_0000325472" description="Anthranilate phosphoribosyltransferase">
    <location>
        <begin position="1"/>
        <end position="344"/>
    </location>
</feature>
<feature type="binding site" evidence="1">
    <location>
        <position position="84"/>
    </location>
    <ligand>
        <name>5-phospho-alpha-D-ribose 1-diphosphate</name>
        <dbReference type="ChEBI" id="CHEBI:58017"/>
    </ligand>
</feature>
<feature type="binding site" evidence="1">
    <location>
        <position position="84"/>
    </location>
    <ligand>
        <name>anthranilate</name>
        <dbReference type="ChEBI" id="CHEBI:16567"/>
        <label>1</label>
    </ligand>
</feature>
<feature type="binding site" evidence="1">
    <location>
        <begin position="87"/>
        <end position="88"/>
    </location>
    <ligand>
        <name>5-phospho-alpha-D-ribose 1-diphosphate</name>
        <dbReference type="ChEBI" id="CHEBI:58017"/>
    </ligand>
</feature>
<feature type="binding site" evidence="1">
    <location>
        <position position="92"/>
    </location>
    <ligand>
        <name>5-phospho-alpha-D-ribose 1-diphosphate</name>
        <dbReference type="ChEBI" id="CHEBI:58017"/>
    </ligand>
</feature>
<feature type="binding site" evidence="1">
    <location>
        <begin position="94"/>
        <end position="97"/>
    </location>
    <ligand>
        <name>5-phospho-alpha-D-ribose 1-diphosphate</name>
        <dbReference type="ChEBI" id="CHEBI:58017"/>
    </ligand>
</feature>
<feature type="binding site" evidence="1">
    <location>
        <position position="96"/>
    </location>
    <ligand>
        <name>Mg(2+)</name>
        <dbReference type="ChEBI" id="CHEBI:18420"/>
        <label>1</label>
    </ligand>
</feature>
<feature type="binding site" evidence="1">
    <location>
        <begin position="112"/>
        <end position="120"/>
    </location>
    <ligand>
        <name>5-phospho-alpha-D-ribose 1-diphosphate</name>
        <dbReference type="ChEBI" id="CHEBI:58017"/>
    </ligand>
</feature>
<feature type="binding site" evidence="1">
    <location>
        <position position="115"/>
    </location>
    <ligand>
        <name>anthranilate</name>
        <dbReference type="ChEBI" id="CHEBI:16567"/>
        <label>1</label>
    </ligand>
</feature>
<feature type="binding site" evidence="1">
    <location>
        <position position="124"/>
    </location>
    <ligand>
        <name>5-phospho-alpha-D-ribose 1-diphosphate</name>
        <dbReference type="ChEBI" id="CHEBI:58017"/>
    </ligand>
</feature>
<feature type="binding site" evidence="1">
    <location>
        <position position="170"/>
    </location>
    <ligand>
        <name>anthranilate</name>
        <dbReference type="ChEBI" id="CHEBI:16567"/>
        <label>2</label>
    </ligand>
</feature>
<feature type="binding site" evidence="1">
    <location>
        <position position="229"/>
    </location>
    <ligand>
        <name>Mg(2+)</name>
        <dbReference type="ChEBI" id="CHEBI:18420"/>
        <label>2</label>
    </ligand>
</feature>
<feature type="binding site" evidence="1">
    <location>
        <position position="230"/>
    </location>
    <ligand>
        <name>Mg(2+)</name>
        <dbReference type="ChEBI" id="CHEBI:18420"/>
        <label>1</label>
    </ligand>
</feature>
<feature type="binding site" evidence="1">
    <location>
        <position position="230"/>
    </location>
    <ligand>
        <name>Mg(2+)</name>
        <dbReference type="ChEBI" id="CHEBI:18420"/>
        <label>2</label>
    </ligand>
</feature>
<sequence>MTSSWPQLLELLLRGGELEDDQAAALMQAWLAEELEPVQTGAFLAALRCRNYRPVELAAMARVLRAASPLPCPRPALPLVDTCGTGGDGADSFNISTAVAFTAAACGVVVAKHGNRSASGKVGSADVLEGLGLQLQAPLQQVVGALEQAGITFLFAPGWHPALKSLAPLRKCLGVRTVFNLLGPLVNPLQPDAQVLGVATEDLLEPMAGALQLLGLKRAVVVYGHGGLDEASLSGTNQLMVLEDGQLRRDQLDPQALGLALQPIDALSGGDLARNQTILKAVLQGQGSQAQKDVVALNTALVLWSAGQVSSWREGVQQAHDCLASGKPWQRFEQLAAALTPVGG</sequence>
<reference key="1">
    <citation type="submission" date="2006-05" db="EMBL/GenBank/DDBJ databases">
        <authorList>
            <consortium name="Genoscope"/>
        </authorList>
    </citation>
    <scope>NUCLEOTIDE SEQUENCE [LARGE SCALE GENOMIC DNA]</scope>
    <source>
        <strain>RCC307</strain>
    </source>
</reference>
<accession>A5GTM6</accession>
<evidence type="ECO:0000255" key="1">
    <source>
        <dbReference type="HAMAP-Rule" id="MF_00211"/>
    </source>
</evidence>
<protein>
    <recommendedName>
        <fullName evidence="1">Anthranilate phosphoribosyltransferase</fullName>
        <ecNumber evidence="1">2.4.2.18</ecNumber>
    </recommendedName>
</protein>
<organism>
    <name type="scientific">Synechococcus sp. (strain RCC307)</name>
    <dbReference type="NCBI Taxonomy" id="316278"/>
    <lineage>
        <taxon>Bacteria</taxon>
        <taxon>Bacillati</taxon>
        <taxon>Cyanobacteriota</taxon>
        <taxon>Cyanophyceae</taxon>
        <taxon>Synechococcales</taxon>
        <taxon>Synechococcaceae</taxon>
        <taxon>Synechococcus</taxon>
    </lineage>
</organism>
<name>TRPD_SYNR3</name>
<comment type="function">
    <text evidence="1">Catalyzes the transfer of the phosphoribosyl group of 5-phosphorylribose-1-pyrophosphate (PRPP) to anthranilate to yield N-(5'-phosphoribosyl)-anthranilate (PRA).</text>
</comment>
<comment type="catalytic activity">
    <reaction evidence="1">
        <text>N-(5-phospho-beta-D-ribosyl)anthranilate + diphosphate = 5-phospho-alpha-D-ribose 1-diphosphate + anthranilate</text>
        <dbReference type="Rhea" id="RHEA:11768"/>
        <dbReference type="ChEBI" id="CHEBI:16567"/>
        <dbReference type="ChEBI" id="CHEBI:18277"/>
        <dbReference type="ChEBI" id="CHEBI:33019"/>
        <dbReference type="ChEBI" id="CHEBI:58017"/>
        <dbReference type="EC" id="2.4.2.18"/>
    </reaction>
</comment>
<comment type="cofactor">
    <cofactor evidence="1">
        <name>Mg(2+)</name>
        <dbReference type="ChEBI" id="CHEBI:18420"/>
    </cofactor>
    <text evidence="1">Binds 2 magnesium ions per monomer.</text>
</comment>
<comment type="pathway">
    <text evidence="1">Amino-acid biosynthesis; L-tryptophan biosynthesis; L-tryptophan from chorismate: step 2/5.</text>
</comment>
<comment type="subunit">
    <text evidence="1">Homodimer.</text>
</comment>
<comment type="similarity">
    <text evidence="1">Belongs to the anthranilate phosphoribosyltransferase family.</text>
</comment>